<reference key="1">
    <citation type="journal article" date="2002" name="Proc. Natl. Acad. Sci. U.S.A.">
        <title>Genome sequence of a serotype M3 strain of group A Streptococcus: phage-encoded toxins, the high-virulence phenotype, and clone emergence.</title>
        <authorList>
            <person name="Beres S.B."/>
            <person name="Sylva G.L."/>
            <person name="Barbian K.D."/>
            <person name="Lei B."/>
            <person name="Hoff J.S."/>
            <person name="Mammarella N.D."/>
            <person name="Liu M.-Y."/>
            <person name="Smoot J.C."/>
            <person name="Porcella S.F."/>
            <person name="Parkins L.D."/>
            <person name="Campbell D.S."/>
            <person name="Smith T.M."/>
            <person name="McCormick J.K."/>
            <person name="Leung D.Y.M."/>
            <person name="Schlievert P.M."/>
            <person name="Musser J.M."/>
        </authorList>
    </citation>
    <scope>NUCLEOTIDE SEQUENCE [LARGE SCALE GENOMIC DNA]</scope>
    <source>
        <strain>ATCC BAA-595 / MGAS315</strain>
    </source>
</reference>
<proteinExistence type="inferred from homology"/>
<feature type="chain" id="PRO_0000146610" description="Small ribosomal subunit protein uS10">
    <location>
        <begin position="1"/>
        <end position="102"/>
    </location>
</feature>
<keyword id="KW-0687">Ribonucleoprotein</keyword>
<keyword id="KW-0689">Ribosomal protein</keyword>
<dbReference type="EMBL" id="AE014074">
    <property type="protein sequence ID" value="AAM78646.1"/>
    <property type="molecule type" value="Genomic_DNA"/>
</dbReference>
<dbReference type="RefSeq" id="WP_001284518.1">
    <property type="nucleotide sequence ID" value="NC_004070.1"/>
</dbReference>
<dbReference type="SMR" id="P0DE62"/>
<dbReference type="GeneID" id="69900025"/>
<dbReference type="KEGG" id="spg:SpyM3_0039"/>
<dbReference type="HOGENOM" id="CLU_122625_1_3_9"/>
<dbReference type="Proteomes" id="UP000000564">
    <property type="component" value="Chromosome"/>
</dbReference>
<dbReference type="GO" id="GO:1990904">
    <property type="term" value="C:ribonucleoprotein complex"/>
    <property type="evidence" value="ECO:0007669"/>
    <property type="project" value="UniProtKB-KW"/>
</dbReference>
<dbReference type="GO" id="GO:0005840">
    <property type="term" value="C:ribosome"/>
    <property type="evidence" value="ECO:0007669"/>
    <property type="project" value="UniProtKB-KW"/>
</dbReference>
<dbReference type="GO" id="GO:0003735">
    <property type="term" value="F:structural constituent of ribosome"/>
    <property type="evidence" value="ECO:0007669"/>
    <property type="project" value="InterPro"/>
</dbReference>
<dbReference type="GO" id="GO:0000049">
    <property type="term" value="F:tRNA binding"/>
    <property type="evidence" value="ECO:0007669"/>
    <property type="project" value="UniProtKB-UniRule"/>
</dbReference>
<dbReference type="GO" id="GO:0006412">
    <property type="term" value="P:translation"/>
    <property type="evidence" value="ECO:0007669"/>
    <property type="project" value="UniProtKB-UniRule"/>
</dbReference>
<dbReference type="FunFam" id="3.30.70.600:FF:000001">
    <property type="entry name" value="30S ribosomal protein S10"/>
    <property type="match status" value="1"/>
</dbReference>
<dbReference type="Gene3D" id="3.30.70.600">
    <property type="entry name" value="Ribosomal protein S10 domain"/>
    <property type="match status" value="1"/>
</dbReference>
<dbReference type="HAMAP" id="MF_00508">
    <property type="entry name" value="Ribosomal_uS10"/>
    <property type="match status" value="1"/>
</dbReference>
<dbReference type="InterPro" id="IPR001848">
    <property type="entry name" value="Ribosomal_uS10"/>
</dbReference>
<dbReference type="InterPro" id="IPR018268">
    <property type="entry name" value="Ribosomal_uS10_CS"/>
</dbReference>
<dbReference type="InterPro" id="IPR027486">
    <property type="entry name" value="Ribosomal_uS10_dom"/>
</dbReference>
<dbReference type="InterPro" id="IPR036838">
    <property type="entry name" value="Ribosomal_uS10_dom_sf"/>
</dbReference>
<dbReference type="NCBIfam" id="NF001861">
    <property type="entry name" value="PRK00596.1"/>
    <property type="match status" value="1"/>
</dbReference>
<dbReference type="NCBIfam" id="TIGR01049">
    <property type="entry name" value="rpsJ_bact"/>
    <property type="match status" value="1"/>
</dbReference>
<dbReference type="PANTHER" id="PTHR11700">
    <property type="entry name" value="30S RIBOSOMAL PROTEIN S10 FAMILY MEMBER"/>
    <property type="match status" value="1"/>
</dbReference>
<dbReference type="Pfam" id="PF00338">
    <property type="entry name" value="Ribosomal_S10"/>
    <property type="match status" value="1"/>
</dbReference>
<dbReference type="PRINTS" id="PR00971">
    <property type="entry name" value="RIBOSOMALS10"/>
</dbReference>
<dbReference type="SMART" id="SM01403">
    <property type="entry name" value="Ribosomal_S10"/>
    <property type="match status" value="1"/>
</dbReference>
<dbReference type="SUPFAM" id="SSF54999">
    <property type="entry name" value="Ribosomal protein S10"/>
    <property type="match status" value="1"/>
</dbReference>
<dbReference type="PROSITE" id="PS00361">
    <property type="entry name" value="RIBOSOMAL_S10"/>
    <property type="match status" value="1"/>
</dbReference>
<name>RS10_STRP3</name>
<sequence>MANKKIRIRLKAYEHRTLDTAAEKIVETATRTGATVAGPVPLPTERSLYTIIRATHKYKDSREQFEMRTHKRLVDIINPTQKTVDALMKLDLPSGVNVEIKL</sequence>
<organism>
    <name type="scientific">Streptococcus pyogenes serotype M3 (strain ATCC BAA-595 / MGAS315)</name>
    <dbReference type="NCBI Taxonomy" id="198466"/>
    <lineage>
        <taxon>Bacteria</taxon>
        <taxon>Bacillati</taxon>
        <taxon>Bacillota</taxon>
        <taxon>Bacilli</taxon>
        <taxon>Lactobacillales</taxon>
        <taxon>Streptococcaceae</taxon>
        <taxon>Streptococcus</taxon>
    </lineage>
</organism>
<protein>
    <recommendedName>
        <fullName evidence="1">Small ribosomal subunit protein uS10</fullName>
    </recommendedName>
    <alternativeName>
        <fullName evidence="2">30S ribosomal protein S10</fullName>
    </alternativeName>
</protein>
<comment type="function">
    <text evidence="1">Involved in the binding of tRNA to the ribosomes.</text>
</comment>
<comment type="subunit">
    <text evidence="1">Part of the 30S ribosomal subunit.</text>
</comment>
<comment type="similarity">
    <text evidence="1">Belongs to the universal ribosomal protein uS10 family.</text>
</comment>
<evidence type="ECO:0000255" key="1">
    <source>
        <dbReference type="HAMAP-Rule" id="MF_00508"/>
    </source>
</evidence>
<evidence type="ECO:0000305" key="2"/>
<gene>
    <name evidence="1" type="primary">rpsJ</name>
    <name type="ordered locus">SpyM3_0039</name>
</gene>
<accession>P0DE62</accession>
<accession>P66342</accession>
<accession>Q9A1X5</accession>